<comment type="function">
    <text evidence="1">Cell wall formation. Adds enolpyruvyl to UDP-N-acetylglucosamine.</text>
</comment>
<comment type="catalytic activity">
    <reaction evidence="1">
        <text>phosphoenolpyruvate + UDP-N-acetyl-alpha-D-glucosamine = UDP-N-acetyl-3-O-(1-carboxyvinyl)-alpha-D-glucosamine + phosphate</text>
        <dbReference type="Rhea" id="RHEA:18681"/>
        <dbReference type="ChEBI" id="CHEBI:43474"/>
        <dbReference type="ChEBI" id="CHEBI:57705"/>
        <dbReference type="ChEBI" id="CHEBI:58702"/>
        <dbReference type="ChEBI" id="CHEBI:68483"/>
        <dbReference type="EC" id="2.5.1.7"/>
    </reaction>
</comment>
<comment type="pathway">
    <text evidence="1">Cell wall biogenesis; peptidoglycan biosynthesis.</text>
</comment>
<comment type="subcellular location">
    <subcellularLocation>
        <location evidence="1">Cytoplasm</location>
    </subcellularLocation>
</comment>
<comment type="similarity">
    <text evidence="1">Belongs to the EPSP synthase family. MurA subfamily.</text>
</comment>
<gene>
    <name evidence="1" type="primary">murA</name>
    <name type="ordered locus">Rmag_0600</name>
</gene>
<keyword id="KW-0131">Cell cycle</keyword>
<keyword id="KW-0132">Cell division</keyword>
<keyword id="KW-0133">Cell shape</keyword>
<keyword id="KW-0961">Cell wall biogenesis/degradation</keyword>
<keyword id="KW-0963">Cytoplasm</keyword>
<keyword id="KW-0573">Peptidoglycan synthesis</keyword>
<keyword id="KW-0670">Pyruvate</keyword>
<keyword id="KW-0808">Transferase</keyword>
<name>MURA_RUTMC</name>
<feature type="chain" id="PRO_1000023095" description="UDP-N-acetylglucosamine 1-carboxyvinyltransferase">
    <location>
        <begin position="1"/>
        <end position="419"/>
    </location>
</feature>
<feature type="active site" description="Proton donor" evidence="1">
    <location>
        <position position="117"/>
    </location>
</feature>
<feature type="binding site" evidence="1">
    <location>
        <begin position="22"/>
        <end position="23"/>
    </location>
    <ligand>
        <name>phosphoenolpyruvate</name>
        <dbReference type="ChEBI" id="CHEBI:58702"/>
    </ligand>
</feature>
<feature type="binding site" evidence="1">
    <location>
        <position position="93"/>
    </location>
    <ligand>
        <name>UDP-N-acetyl-alpha-D-glucosamine</name>
        <dbReference type="ChEBI" id="CHEBI:57705"/>
    </ligand>
</feature>
<feature type="binding site" evidence="1">
    <location>
        <position position="306"/>
    </location>
    <ligand>
        <name>UDP-N-acetyl-alpha-D-glucosamine</name>
        <dbReference type="ChEBI" id="CHEBI:57705"/>
    </ligand>
</feature>
<feature type="binding site" evidence="1">
    <location>
        <position position="328"/>
    </location>
    <ligand>
        <name>UDP-N-acetyl-alpha-D-glucosamine</name>
        <dbReference type="ChEBI" id="CHEBI:57705"/>
    </ligand>
</feature>
<feature type="modified residue" description="2-(S-cysteinyl)pyruvic acid O-phosphothioketal" evidence="1">
    <location>
        <position position="117"/>
    </location>
</feature>
<organism>
    <name type="scientific">Ruthia magnifica subsp. Calyptogena magnifica</name>
    <dbReference type="NCBI Taxonomy" id="413404"/>
    <lineage>
        <taxon>Bacteria</taxon>
        <taxon>Pseudomonadati</taxon>
        <taxon>Pseudomonadota</taxon>
        <taxon>Gammaproteobacteria</taxon>
        <taxon>Candidatus Pseudothioglobaceae</taxon>
        <taxon>Candidatus Ruthturnera</taxon>
    </lineage>
</organism>
<protein>
    <recommendedName>
        <fullName evidence="1">UDP-N-acetylglucosamine 1-carboxyvinyltransferase</fullName>
        <ecNumber evidence="1">2.5.1.7</ecNumber>
    </recommendedName>
    <alternativeName>
        <fullName evidence="1">Enoylpyruvate transferase</fullName>
    </alternativeName>
    <alternativeName>
        <fullName evidence="1">UDP-N-acetylglucosamine enolpyruvyl transferase</fullName>
        <shortName evidence="1">EPT</shortName>
    </alternativeName>
</protein>
<proteinExistence type="inferred from homology"/>
<evidence type="ECO:0000255" key="1">
    <source>
        <dbReference type="HAMAP-Rule" id="MF_00111"/>
    </source>
</evidence>
<reference key="1">
    <citation type="journal article" date="2007" name="Science">
        <title>The Calyptogena magnifica chemoautotrophic symbiont genome.</title>
        <authorList>
            <person name="Newton I.L.G."/>
            <person name="Woyke T."/>
            <person name="Auchtung T.A."/>
            <person name="Dilly G.F."/>
            <person name="Dutton R.J."/>
            <person name="Fisher M.C."/>
            <person name="Fontanez K.M."/>
            <person name="Lau E."/>
            <person name="Stewart F.J."/>
            <person name="Richardson P.M."/>
            <person name="Barry K.W."/>
            <person name="Saunders E."/>
            <person name="Detter J.C."/>
            <person name="Wu D."/>
            <person name="Eisen J.A."/>
            <person name="Cavanaugh C.M."/>
        </authorList>
    </citation>
    <scope>NUCLEOTIDE SEQUENCE [LARGE SCALE GENOMIC DNA]</scope>
</reference>
<accession>A1AWP4</accession>
<sequence>MYKLIINGGIALNGHVKTAGSKNSSLPILFASILANGPITLTNTPHLSDVSTTLRLLMDMGAEFILESDNSLFIDSSNLTNLVAQYNLVKTMRASILALGPMLAKYCKAKISLPGGCAIGSRPVNLHLKALEDLGAFIKVENGYIYATAKKLIGTEIHFDQISVTATENIIMAATLATGITTIYNAAQEPEIVDLINCLIKMGAKISGAGTSIITIEGVDELSGVTYAVCPDRIEAGTYLVAATITGGKITIKNVCYQSMRAILVKLLETGADIKTEKNSITLDMKGKRPKAVNIKTSTYPNFPTDMQAQFTALNAIADGYSTITETIFENRFMHIPELSRMGASLVLEGNTVVCKGVKSLTGAYLMATDLRASASLVLAGLAAIGTTTIERVYHLDRGYEMIEEKLKLLGAQIERVQD</sequence>
<dbReference type="EC" id="2.5.1.7" evidence="1"/>
<dbReference type="EMBL" id="CP000488">
    <property type="protein sequence ID" value="ABL02351.1"/>
    <property type="molecule type" value="Genomic_DNA"/>
</dbReference>
<dbReference type="RefSeq" id="WP_011737976.1">
    <property type="nucleotide sequence ID" value="NC_008610.1"/>
</dbReference>
<dbReference type="SMR" id="A1AWP4"/>
<dbReference type="STRING" id="413404.Rmag_0600"/>
<dbReference type="KEGG" id="rma:Rmag_0600"/>
<dbReference type="eggNOG" id="COG0766">
    <property type="taxonomic scope" value="Bacteria"/>
</dbReference>
<dbReference type="HOGENOM" id="CLU_027387_0_0_6"/>
<dbReference type="OrthoDB" id="9803760at2"/>
<dbReference type="UniPathway" id="UPA00219"/>
<dbReference type="Proteomes" id="UP000002587">
    <property type="component" value="Chromosome"/>
</dbReference>
<dbReference type="GO" id="GO:0005737">
    <property type="term" value="C:cytoplasm"/>
    <property type="evidence" value="ECO:0007669"/>
    <property type="project" value="UniProtKB-SubCell"/>
</dbReference>
<dbReference type="GO" id="GO:0008760">
    <property type="term" value="F:UDP-N-acetylglucosamine 1-carboxyvinyltransferase activity"/>
    <property type="evidence" value="ECO:0007669"/>
    <property type="project" value="UniProtKB-UniRule"/>
</dbReference>
<dbReference type="GO" id="GO:0051301">
    <property type="term" value="P:cell division"/>
    <property type="evidence" value="ECO:0007669"/>
    <property type="project" value="UniProtKB-KW"/>
</dbReference>
<dbReference type="GO" id="GO:0071555">
    <property type="term" value="P:cell wall organization"/>
    <property type="evidence" value="ECO:0007669"/>
    <property type="project" value="UniProtKB-KW"/>
</dbReference>
<dbReference type="GO" id="GO:0009252">
    <property type="term" value="P:peptidoglycan biosynthetic process"/>
    <property type="evidence" value="ECO:0007669"/>
    <property type="project" value="UniProtKB-UniRule"/>
</dbReference>
<dbReference type="GO" id="GO:0008360">
    <property type="term" value="P:regulation of cell shape"/>
    <property type="evidence" value="ECO:0007669"/>
    <property type="project" value="UniProtKB-KW"/>
</dbReference>
<dbReference type="GO" id="GO:0019277">
    <property type="term" value="P:UDP-N-acetylgalactosamine biosynthetic process"/>
    <property type="evidence" value="ECO:0007669"/>
    <property type="project" value="InterPro"/>
</dbReference>
<dbReference type="CDD" id="cd01555">
    <property type="entry name" value="UdpNAET"/>
    <property type="match status" value="1"/>
</dbReference>
<dbReference type="FunFam" id="3.65.10.10:FF:000001">
    <property type="entry name" value="UDP-N-acetylglucosamine 1-carboxyvinyltransferase"/>
    <property type="match status" value="1"/>
</dbReference>
<dbReference type="Gene3D" id="3.65.10.10">
    <property type="entry name" value="Enolpyruvate transferase domain"/>
    <property type="match status" value="2"/>
</dbReference>
<dbReference type="HAMAP" id="MF_00111">
    <property type="entry name" value="MurA"/>
    <property type="match status" value="1"/>
</dbReference>
<dbReference type="InterPro" id="IPR001986">
    <property type="entry name" value="Enolpyruvate_Tfrase_dom"/>
</dbReference>
<dbReference type="InterPro" id="IPR036968">
    <property type="entry name" value="Enolpyruvate_Tfrase_sf"/>
</dbReference>
<dbReference type="InterPro" id="IPR050068">
    <property type="entry name" value="MurA_subfamily"/>
</dbReference>
<dbReference type="InterPro" id="IPR013792">
    <property type="entry name" value="RNA3'P_cycl/enolpyr_Trfase_a/b"/>
</dbReference>
<dbReference type="InterPro" id="IPR005750">
    <property type="entry name" value="UDP_GlcNAc_COvinyl_MurA"/>
</dbReference>
<dbReference type="NCBIfam" id="TIGR01072">
    <property type="entry name" value="murA"/>
    <property type="match status" value="1"/>
</dbReference>
<dbReference type="NCBIfam" id="NF006873">
    <property type="entry name" value="PRK09369.1"/>
    <property type="match status" value="1"/>
</dbReference>
<dbReference type="PANTHER" id="PTHR43783">
    <property type="entry name" value="UDP-N-ACETYLGLUCOSAMINE 1-CARBOXYVINYLTRANSFERASE"/>
    <property type="match status" value="1"/>
</dbReference>
<dbReference type="PANTHER" id="PTHR43783:SF1">
    <property type="entry name" value="UDP-N-ACETYLGLUCOSAMINE 1-CARBOXYVINYLTRANSFERASE"/>
    <property type="match status" value="1"/>
</dbReference>
<dbReference type="Pfam" id="PF00275">
    <property type="entry name" value="EPSP_synthase"/>
    <property type="match status" value="1"/>
</dbReference>
<dbReference type="SUPFAM" id="SSF55205">
    <property type="entry name" value="EPT/RTPC-like"/>
    <property type="match status" value="1"/>
</dbReference>